<dbReference type="EC" id="1.17.99.9" evidence="1"/>
<dbReference type="EMBL" id="CP001298">
    <property type="protein sequence ID" value="ACK82751.1"/>
    <property type="molecule type" value="Genomic_DNA"/>
</dbReference>
<dbReference type="RefSeq" id="WP_015950506.1">
    <property type="nucleotide sequence ID" value="NC_011757.1"/>
</dbReference>
<dbReference type="SMR" id="B7KV80"/>
<dbReference type="KEGG" id="mch:Mchl_1888"/>
<dbReference type="HOGENOM" id="CLU_017627_0_0_5"/>
<dbReference type="UniPathway" id="UPA00269">
    <property type="reaction ID" value="UER00713"/>
</dbReference>
<dbReference type="Proteomes" id="UP000002385">
    <property type="component" value="Chromosome"/>
</dbReference>
<dbReference type="GO" id="GO:0005886">
    <property type="term" value="C:plasma membrane"/>
    <property type="evidence" value="ECO:0007669"/>
    <property type="project" value="UniProtKB-SubCell"/>
</dbReference>
<dbReference type="GO" id="GO:0046872">
    <property type="term" value="F:metal ion binding"/>
    <property type="evidence" value="ECO:0007669"/>
    <property type="project" value="UniProtKB-KW"/>
</dbReference>
<dbReference type="GO" id="GO:0016653">
    <property type="term" value="F:oxidoreductase activity, acting on NAD(P)H, heme protein as acceptor"/>
    <property type="evidence" value="ECO:0007669"/>
    <property type="project" value="InterPro"/>
</dbReference>
<dbReference type="GO" id="GO:0006784">
    <property type="term" value="P:heme A biosynthetic process"/>
    <property type="evidence" value="ECO:0007669"/>
    <property type="project" value="UniProtKB-UniRule"/>
</dbReference>
<dbReference type="HAMAP" id="MF_01665">
    <property type="entry name" value="HemeA_synth_type2"/>
    <property type="match status" value="1"/>
</dbReference>
<dbReference type="InterPro" id="IPR003780">
    <property type="entry name" value="COX15/CtaA_fam"/>
</dbReference>
<dbReference type="InterPro" id="IPR023754">
    <property type="entry name" value="HemeA_Synthase_type2"/>
</dbReference>
<dbReference type="PANTHER" id="PTHR23289">
    <property type="entry name" value="CYTOCHROME C OXIDASE ASSEMBLY PROTEIN COX15"/>
    <property type="match status" value="1"/>
</dbReference>
<dbReference type="PANTHER" id="PTHR23289:SF2">
    <property type="entry name" value="CYTOCHROME C OXIDASE ASSEMBLY PROTEIN COX15 HOMOLOG"/>
    <property type="match status" value="1"/>
</dbReference>
<dbReference type="Pfam" id="PF02628">
    <property type="entry name" value="COX15-CtaA"/>
    <property type="match status" value="1"/>
</dbReference>
<accession>B7KV80</accession>
<keyword id="KW-1003">Cell membrane</keyword>
<keyword id="KW-0350">Heme biosynthesis</keyword>
<keyword id="KW-0408">Iron</keyword>
<keyword id="KW-0472">Membrane</keyword>
<keyword id="KW-0479">Metal-binding</keyword>
<keyword id="KW-0560">Oxidoreductase</keyword>
<keyword id="KW-0812">Transmembrane</keyword>
<keyword id="KW-1133">Transmembrane helix</keyword>
<reference key="1">
    <citation type="submission" date="2008-12" db="EMBL/GenBank/DDBJ databases">
        <title>Complete sequence of chromosome of Methylobacterium chloromethanicum CM4.</title>
        <authorList>
            <consortium name="US DOE Joint Genome Institute"/>
            <person name="Lucas S."/>
            <person name="Copeland A."/>
            <person name="Lapidus A."/>
            <person name="Glavina del Rio T."/>
            <person name="Dalin E."/>
            <person name="Tice H."/>
            <person name="Bruce D."/>
            <person name="Goodwin L."/>
            <person name="Pitluck S."/>
            <person name="Chertkov O."/>
            <person name="Brettin T."/>
            <person name="Detter J.C."/>
            <person name="Han C."/>
            <person name="Larimer F."/>
            <person name="Land M."/>
            <person name="Hauser L."/>
            <person name="Kyrpides N."/>
            <person name="Mikhailova N."/>
            <person name="Marx C."/>
            <person name="Richardson P."/>
        </authorList>
    </citation>
    <scope>NUCLEOTIDE SEQUENCE [LARGE SCALE GENOMIC DNA]</scope>
    <source>
        <strain>CM4 / NCIMB 13688</strain>
    </source>
</reference>
<gene>
    <name evidence="1" type="primary">ctaA</name>
    <name type="ordered locus">Mchl_1888</name>
</gene>
<name>CTAA_METC4</name>
<proteinExistence type="inferred from homology"/>
<organism>
    <name type="scientific">Methylorubrum extorquens (strain CM4 / NCIMB 13688)</name>
    <name type="common">Methylobacterium extorquens</name>
    <dbReference type="NCBI Taxonomy" id="440085"/>
    <lineage>
        <taxon>Bacteria</taxon>
        <taxon>Pseudomonadati</taxon>
        <taxon>Pseudomonadota</taxon>
        <taxon>Alphaproteobacteria</taxon>
        <taxon>Hyphomicrobiales</taxon>
        <taxon>Methylobacteriaceae</taxon>
        <taxon>Methylorubrum</taxon>
    </lineage>
</organism>
<sequence length="382" mass="40276">MRLSTNPTLDRFDAVPAASYRPGHGAVRAWLYLLAVLVVAMVAVGGATRLTGSGLSITEWRPVTGVVPPLDAADWAVEFDKYRDTPQYRILNQGIGLDGFKTLYWWEWGHRLLGRIVGLVFFLPFAWFWARGMLGRRLLTGLLGLGLLGGLQGAIGWIMVASGLQPGMTAVAPLKLALHLTTASLILAGLVWLAAGTRPRALAPAPESVRVVACLLPALVLVQIWLGGLVAGSKAGLLYNTWPDMDGVLVPPARVLFDKVPFIENFIDNLALVQFNHRLFAYLVVAVAIAHAIQAARTASGSAAAGRAMGVAALATAQMGLGIATLLLHVPLWAGLAHQVFAMAVLIMATVHARLARGVPAAAAPTGAEVPIGLEALAGRGA</sequence>
<comment type="function">
    <text evidence="1">Catalyzes the conversion of heme O to heme A by two successive hydroxylations of the methyl group at C8. The first hydroxylation forms heme I, the second hydroxylation results in an unstable dihydroxymethyl group, which spontaneously dehydrates, resulting in the formyl group of heme A.</text>
</comment>
<comment type="catalytic activity">
    <reaction evidence="1">
        <text>Fe(II)-heme o + 2 A + H2O = Fe(II)-heme a + 2 AH2</text>
        <dbReference type="Rhea" id="RHEA:63388"/>
        <dbReference type="ChEBI" id="CHEBI:13193"/>
        <dbReference type="ChEBI" id="CHEBI:15377"/>
        <dbReference type="ChEBI" id="CHEBI:17499"/>
        <dbReference type="ChEBI" id="CHEBI:60530"/>
        <dbReference type="ChEBI" id="CHEBI:61715"/>
        <dbReference type="EC" id="1.17.99.9"/>
    </reaction>
    <physiologicalReaction direction="left-to-right" evidence="1">
        <dbReference type="Rhea" id="RHEA:63389"/>
    </physiologicalReaction>
</comment>
<comment type="cofactor">
    <cofactor evidence="1">
        <name>heme b</name>
        <dbReference type="ChEBI" id="CHEBI:60344"/>
    </cofactor>
</comment>
<comment type="pathway">
    <text evidence="1">Porphyrin-containing compound metabolism; heme A biosynthesis; heme A from heme O: step 1/1.</text>
</comment>
<comment type="subunit">
    <text evidence="1">Interacts with CtaB.</text>
</comment>
<comment type="subcellular location">
    <subcellularLocation>
        <location evidence="1">Cell membrane</location>
        <topology evidence="1">Multi-pass membrane protein</topology>
    </subcellularLocation>
</comment>
<comment type="similarity">
    <text evidence="1">Belongs to the COX15/CtaA family. Type 2 subfamily.</text>
</comment>
<protein>
    <recommendedName>
        <fullName evidence="1">Heme A synthase</fullName>
        <shortName evidence="1">HAS</shortName>
        <ecNumber evidence="1">1.17.99.9</ecNumber>
    </recommendedName>
    <alternativeName>
        <fullName evidence="1">Cytochrome aa3-controlling protein</fullName>
    </alternativeName>
</protein>
<feature type="chain" id="PRO_1000187251" description="Heme A synthase">
    <location>
        <begin position="1"/>
        <end position="382"/>
    </location>
</feature>
<feature type="transmembrane region" description="Helical" evidence="1">
    <location>
        <begin position="25"/>
        <end position="45"/>
    </location>
</feature>
<feature type="transmembrane region" description="Helical" evidence="1">
    <location>
        <begin position="112"/>
        <end position="132"/>
    </location>
</feature>
<feature type="transmembrane region" description="Helical" evidence="1">
    <location>
        <begin position="141"/>
        <end position="161"/>
    </location>
</feature>
<feature type="transmembrane region" description="Helical" evidence="1">
    <location>
        <begin position="176"/>
        <end position="196"/>
    </location>
</feature>
<feature type="transmembrane region" description="Helical" evidence="1">
    <location>
        <begin position="211"/>
        <end position="231"/>
    </location>
</feature>
<feature type="transmembrane region" description="Helical" evidence="1">
    <location>
        <begin position="270"/>
        <end position="290"/>
    </location>
</feature>
<feature type="transmembrane region" description="Helical" evidence="1">
    <location>
        <begin position="303"/>
        <end position="323"/>
    </location>
</feature>
<feature type="transmembrane region" description="Helical" evidence="1">
    <location>
        <begin position="327"/>
        <end position="347"/>
    </location>
</feature>
<feature type="binding site" description="axial binding residue" evidence="1">
    <location>
        <position position="277"/>
    </location>
    <ligand>
        <name>heme</name>
        <dbReference type="ChEBI" id="CHEBI:30413"/>
    </ligand>
    <ligandPart>
        <name>Fe</name>
        <dbReference type="ChEBI" id="CHEBI:18248"/>
    </ligandPart>
</feature>
<feature type="binding site" description="axial binding residue" evidence="1">
    <location>
        <position position="338"/>
    </location>
    <ligand>
        <name>heme</name>
        <dbReference type="ChEBI" id="CHEBI:30413"/>
    </ligand>
    <ligandPart>
        <name>Fe</name>
        <dbReference type="ChEBI" id="CHEBI:18248"/>
    </ligandPart>
</feature>
<evidence type="ECO:0000255" key="1">
    <source>
        <dbReference type="HAMAP-Rule" id="MF_01665"/>
    </source>
</evidence>